<proteinExistence type="evidence at transcript level"/>
<dbReference type="EC" id="3.6.4.12"/>
<dbReference type="EMBL" id="AJ719352">
    <property type="protein sequence ID" value="CAG31011.1"/>
    <property type="molecule type" value="mRNA"/>
</dbReference>
<dbReference type="RefSeq" id="NP_001006421.1">
    <property type="nucleotide sequence ID" value="NM_001006421.1"/>
</dbReference>
<dbReference type="SMR" id="Q5ZMN2"/>
<dbReference type="BioGRID" id="682782">
    <property type="interactions" value="1"/>
</dbReference>
<dbReference type="FunCoup" id="Q5ZMN2">
    <property type="interactions" value="1511"/>
</dbReference>
<dbReference type="STRING" id="9031.ENSGALP00000026858"/>
<dbReference type="PaxDb" id="9031-ENSGALP00000042687"/>
<dbReference type="GeneID" id="422043"/>
<dbReference type="KEGG" id="gga:422043"/>
<dbReference type="CTD" id="4172"/>
<dbReference type="VEuPathDB" id="HostDB:geneid_422043"/>
<dbReference type="eggNOG" id="KOG0479">
    <property type="taxonomic scope" value="Eukaryota"/>
</dbReference>
<dbReference type="InParanoid" id="Q5ZMN2"/>
<dbReference type="OrthoDB" id="1882346at2759"/>
<dbReference type="PhylomeDB" id="Q5ZMN2"/>
<dbReference type="PRO" id="PR:Q5ZMN2"/>
<dbReference type="Proteomes" id="UP000000539">
    <property type="component" value="Unassembled WGS sequence"/>
</dbReference>
<dbReference type="GO" id="GO:0071162">
    <property type="term" value="C:CMG complex"/>
    <property type="evidence" value="ECO:0000250"/>
    <property type="project" value="UniProtKB"/>
</dbReference>
<dbReference type="GO" id="GO:0042555">
    <property type="term" value="C:MCM complex"/>
    <property type="evidence" value="ECO:0000250"/>
    <property type="project" value="UniProtKB"/>
</dbReference>
<dbReference type="GO" id="GO:0005634">
    <property type="term" value="C:nucleus"/>
    <property type="evidence" value="ECO:0000318"/>
    <property type="project" value="GO_Central"/>
</dbReference>
<dbReference type="GO" id="GO:0005524">
    <property type="term" value="F:ATP binding"/>
    <property type="evidence" value="ECO:0007669"/>
    <property type="project" value="UniProtKB-KW"/>
</dbReference>
<dbReference type="GO" id="GO:0016887">
    <property type="term" value="F:ATP hydrolysis activity"/>
    <property type="evidence" value="ECO:0007669"/>
    <property type="project" value="InterPro"/>
</dbReference>
<dbReference type="GO" id="GO:0003682">
    <property type="term" value="F:chromatin binding"/>
    <property type="evidence" value="ECO:0000314"/>
    <property type="project" value="AgBase"/>
</dbReference>
<dbReference type="GO" id="GO:0004386">
    <property type="term" value="F:helicase activity"/>
    <property type="evidence" value="ECO:0007669"/>
    <property type="project" value="UniProtKB-KW"/>
</dbReference>
<dbReference type="GO" id="GO:0003697">
    <property type="term" value="F:single-stranded DNA binding"/>
    <property type="evidence" value="ECO:0000318"/>
    <property type="project" value="GO_Central"/>
</dbReference>
<dbReference type="GO" id="GO:0006271">
    <property type="term" value="P:DNA strand elongation involved in DNA replication"/>
    <property type="evidence" value="ECO:0000318"/>
    <property type="project" value="GO_Central"/>
</dbReference>
<dbReference type="GO" id="GO:0000727">
    <property type="term" value="P:double-strand break repair via break-induced replication"/>
    <property type="evidence" value="ECO:0000318"/>
    <property type="project" value="GO_Central"/>
</dbReference>
<dbReference type="GO" id="GO:1902975">
    <property type="term" value="P:mitotic DNA replication initiation"/>
    <property type="evidence" value="ECO:0000318"/>
    <property type="project" value="GO_Central"/>
</dbReference>
<dbReference type="CDD" id="cd17754">
    <property type="entry name" value="MCM3"/>
    <property type="match status" value="1"/>
</dbReference>
<dbReference type="FunFam" id="2.20.28.10:FF:000006">
    <property type="entry name" value="DNA helicase"/>
    <property type="match status" value="1"/>
</dbReference>
<dbReference type="FunFam" id="3.30.1640.10:FF:000002">
    <property type="entry name" value="DNA helicase"/>
    <property type="match status" value="1"/>
</dbReference>
<dbReference type="Gene3D" id="2.20.28.10">
    <property type="match status" value="1"/>
</dbReference>
<dbReference type="Gene3D" id="3.30.1640.10">
    <property type="entry name" value="mini-chromosome maintenance (MCM) complex, chain A, domain 1"/>
    <property type="match status" value="1"/>
</dbReference>
<dbReference type="Gene3D" id="2.40.50.140">
    <property type="entry name" value="Nucleic acid-binding proteins"/>
    <property type="match status" value="1"/>
</dbReference>
<dbReference type="Gene3D" id="3.40.50.300">
    <property type="entry name" value="P-loop containing nucleotide triphosphate hydrolases"/>
    <property type="match status" value="1"/>
</dbReference>
<dbReference type="InterPro" id="IPR003593">
    <property type="entry name" value="AAA+_ATPase"/>
</dbReference>
<dbReference type="InterPro" id="IPR031327">
    <property type="entry name" value="MCM"/>
</dbReference>
<dbReference type="InterPro" id="IPR008046">
    <property type="entry name" value="Mcm3"/>
</dbReference>
<dbReference type="InterPro" id="IPR018525">
    <property type="entry name" value="MCM_CS"/>
</dbReference>
<dbReference type="InterPro" id="IPR001208">
    <property type="entry name" value="MCM_dom"/>
</dbReference>
<dbReference type="InterPro" id="IPR041562">
    <property type="entry name" value="MCM_lid"/>
</dbReference>
<dbReference type="InterPro" id="IPR027925">
    <property type="entry name" value="MCM_N"/>
</dbReference>
<dbReference type="InterPro" id="IPR033762">
    <property type="entry name" value="MCM_OB"/>
</dbReference>
<dbReference type="InterPro" id="IPR012340">
    <property type="entry name" value="NA-bd_OB-fold"/>
</dbReference>
<dbReference type="InterPro" id="IPR027417">
    <property type="entry name" value="P-loop_NTPase"/>
</dbReference>
<dbReference type="InterPro" id="IPR056575">
    <property type="entry name" value="WH_MCM3_C"/>
</dbReference>
<dbReference type="PANTHER" id="PTHR11630">
    <property type="entry name" value="DNA REPLICATION LICENSING FACTOR MCM FAMILY MEMBER"/>
    <property type="match status" value="1"/>
</dbReference>
<dbReference type="PANTHER" id="PTHR11630:SF106">
    <property type="entry name" value="DNA REPLICATION LICENSING FACTOR MCM3"/>
    <property type="match status" value="1"/>
</dbReference>
<dbReference type="Pfam" id="PF00493">
    <property type="entry name" value="MCM"/>
    <property type="match status" value="1"/>
</dbReference>
<dbReference type="Pfam" id="PF17855">
    <property type="entry name" value="MCM_lid"/>
    <property type="match status" value="1"/>
</dbReference>
<dbReference type="Pfam" id="PF14551">
    <property type="entry name" value="MCM_N"/>
    <property type="match status" value="1"/>
</dbReference>
<dbReference type="Pfam" id="PF17207">
    <property type="entry name" value="MCM_OB"/>
    <property type="match status" value="1"/>
</dbReference>
<dbReference type="Pfam" id="PF23191">
    <property type="entry name" value="WH_MCM3_C"/>
    <property type="match status" value="1"/>
</dbReference>
<dbReference type="PRINTS" id="PR01657">
    <property type="entry name" value="MCMFAMILY"/>
</dbReference>
<dbReference type="PRINTS" id="PR01659">
    <property type="entry name" value="MCMPROTEIN3"/>
</dbReference>
<dbReference type="SMART" id="SM00382">
    <property type="entry name" value="AAA"/>
    <property type="match status" value="1"/>
</dbReference>
<dbReference type="SMART" id="SM00350">
    <property type="entry name" value="MCM"/>
    <property type="match status" value="1"/>
</dbReference>
<dbReference type="SUPFAM" id="SSF50249">
    <property type="entry name" value="Nucleic acid-binding proteins"/>
    <property type="match status" value="1"/>
</dbReference>
<dbReference type="SUPFAM" id="SSF52540">
    <property type="entry name" value="P-loop containing nucleoside triphosphate hydrolases"/>
    <property type="match status" value="1"/>
</dbReference>
<dbReference type="PROSITE" id="PS00847">
    <property type="entry name" value="MCM_1"/>
    <property type="match status" value="1"/>
</dbReference>
<dbReference type="PROSITE" id="PS50051">
    <property type="entry name" value="MCM_2"/>
    <property type="match status" value="1"/>
</dbReference>
<accession>Q5ZMN2</accession>
<comment type="function">
    <text evidence="1">Acts as a component of the MCM2-7 complex (MCM complex) which is the replicative helicase essential for 'once per cell cycle' DNA replication initiation and elongation in eukaryotic cells. Core component of CDC45-MCM-GINS (CMG) helicase, the molecular machine that unwinds template DNA during replication, and around which the replisome is built. The active ATPase sites in the MCM2-7 ring are formed through the interaction surfaces of two neighboring subunits such that a critical structure of a conserved arginine finger motif is provided in trans relative to the ATP-binding site of the Walker A box of the adjacent subunit. The six ATPase active sites, however, are likely to contribute differentially to the complex helicase activity. Required for the entry in S phase and for cell division.</text>
</comment>
<comment type="catalytic activity">
    <reaction evidence="1">
        <text>ATP + H2O = ADP + phosphate + H(+)</text>
        <dbReference type="Rhea" id="RHEA:13065"/>
        <dbReference type="ChEBI" id="CHEBI:15377"/>
        <dbReference type="ChEBI" id="CHEBI:15378"/>
        <dbReference type="ChEBI" id="CHEBI:30616"/>
        <dbReference type="ChEBI" id="CHEBI:43474"/>
        <dbReference type="ChEBI" id="CHEBI:456216"/>
        <dbReference type="EC" id="3.6.4.12"/>
    </reaction>
    <physiologicalReaction direction="left-to-right" evidence="1">
        <dbReference type="Rhea" id="RHEA:13066"/>
    </physiologicalReaction>
</comment>
<comment type="subunit">
    <text evidence="1">Component of the MCM2-7 complex. The complex forms a toroidal hexameric ring with the proposed subunit order MCM2-MCM6-MCM4-MCM7-MCM3-MCM5. Component of the CMG helicase complex, a hexameric ring of related MCM2-7 subunits stabilized by CDC45 and the tetrameric GINS complex.</text>
</comment>
<comment type="subcellular location">
    <subcellularLocation>
        <location evidence="1">Nucleus</location>
    </subcellularLocation>
    <subcellularLocation>
        <location evidence="1">Chromosome</location>
    </subcellularLocation>
    <text evidence="1">Associated with chromatin before the formation of nuclei and detaches from it as DNA replication progresses.</text>
</comment>
<comment type="similarity">
    <text evidence="3">Belongs to the MCM family.</text>
</comment>
<organism>
    <name type="scientific">Gallus gallus</name>
    <name type="common">Chicken</name>
    <dbReference type="NCBI Taxonomy" id="9031"/>
    <lineage>
        <taxon>Eukaryota</taxon>
        <taxon>Metazoa</taxon>
        <taxon>Chordata</taxon>
        <taxon>Craniata</taxon>
        <taxon>Vertebrata</taxon>
        <taxon>Euteleostomi</taxon>
        <taxon>Archelosauria</taxon>
        <taxon>Archosauria</taxon>
        <taxon>Dinosauria</taxon>
        <taxon>Saurischia</taxon>
        <taxon>Theropoda</taxon>
        <taxon>Coelurosauria</taxon>
        <taxon>Aves</taxon>
        <taxon>Neognathae</taxon>
        <taxon>Galloanserae</taxon>
        <taxon>Galliformes</taxon>
        <taxon>Phasianidae</taxon>
        <taxon>Phasianinae</taxon>
        <taxon>Gallus</taxon>
    </lineage>
</organism>
<reference key="1">
    <citation type="journal article" date="2005" name="Genome Biol.">
        <title>Full-length cDNAs from chicken bursal lymphocytes to facilitate gene function analysis.</title>
        <authorList>
            <person name="Caldwell R.B."/>
            <person name="Kierzek A.M."/>
            <person name="Arakawa H."/>
            <person name="Bezzubov Y."/>
            <person name="Zaim J."/>
            <person name="Fiedler P."/>
            <person name="Kutter S."/>
            <person name="Blagodatski A."/>
            <person name="Kostovska D."/>
            <person name="Koter M."/>
            <person name="Plachy J."/>
            <person name="Carninci P."/>
            <person name="Hayashizaki Y."/>
            <person name="Buerstedde J.-M."/>
        </authorList>
    </citation>
    <scope>NUCLEOTIDE SEQUENCE [LARGE SCALE MRNA]</scope>
    <source>
        <strain>CB</strain>
        <tissue>Bursa of Fabricius</tissue>
    </source>
</reference>
<evidence type="ECO:0000250" key="1">
    <source>
        <dbReference type="UniProtKB" id="P25205"/>
    </source>
</evidence>
<evidence type="ECO:0000256" key="2">
    <source>
        <dbReference type="SAM" id="MobiDB-lite"/>
    </source>
</evidence>
<evidence type="ECO:0000305" key="3"/>
<keyword id="KW-0067">ATP-binding</keyword>
<keyword id="KW-0131">Cell cycle</keyword>
<keyword id="KW-0158">Chromosome</keyword>
<keyword id="KW-0235">DNA replication</keyword>
<keyword id="KW-0238">DNA-binding</keyword>
<keyword id="KW-0347">Helicase</keyword>
<keyword id="KW-0378">Hydrolase</keyword>
<keyword id="KW-0547">Nucleotide-binding</keyword>
<keyword id="KW-0539">Nucleus</keyword>
<keyword id="KW-1185">Reference proteome</keyword>
<gene>
    <name type="primary">MCM3</name>
    <name type="ORF">RCJMB04_1j4</name>
</gene>
<protein>
    <recommendedName>
        <fullName>DNA replication licensing factor MCM3</fullName>
        <ecNumber>3.6.4.12</ecNumber>
    </recommendedName>
</protein>
<feature type="chain" id="PRO_0000318904" description="DNA replication licensing factor MCM3">
    <location>
        <begin position="1"/>
        <end position="812"/>
    </location>
</feature>
<feature type="domain" description="MCM">
    <location>
        <begin position="296"/>
        <end position="503"/>
    </location>
</feature>
<feature type="region of interest" description="Disordered" evidence="2">
    <location>
        <begin position="663"/>
        <end position="741"/>
    </location>
</feature>
<feature type="short sequence motif" description="Arginine finger">
    <location>
        <begin position="478"/>
        <end position="481"/>
    </location>
</feature>
<feature type="compositionally biased region" description="Acidic residues" evidence="2">
    <location>
        <begin position="671"/>
        <end position="684"/>
    </location>
</feature>
<feature type="compositionally biased region" description="Acidic residues" evidence="2">
    <location>
        <begin position="702"/>
        <end position="719"/>
    </location>
</feature>
<feature type="binding site" evidence="1">
    <location>
        <position position="354"/>
    </location>
    <ligand>
        <name>ADP</name>
        <dbReference type="ChEBI" id="CHEBI:456216"/>
        <note>ligand shared with MCM5</note>
    </ligand>
</feature>
<feature type="binding site" evidence="1">
    <location>
        <position position="394"/>
    </location>
    <ligand>
        <name>ADP</name>
        <dbReference type="ChEBI" id="CHEBI:456216"/>
        <note>ligand shared with MCM5</note>
    </ligand>
</feature>
<feature type="binding site" evidence="1">
    <location>
        <position position="395"/>
    </location>
    <ligand>
        <name>ADP</name>
        <dbReference type="ChEBI" id="CHEBI:456216"/>
        <note>ligand shared with MCM5</note>
    </ligand>
</feature>
<feature type="binding site" evidence="1">
    <location>
        <position position="396"/>
    </location>
    <ligand>
        <name>ADP</name>
        <dbReference type="ChEBI" id="CHEBI:456216"/>
        <note>ligand shared with MCM5</note>
    </ligand>
</feature>
<feature type="binding site" evidence="1">
    <location>
        <position position="398"/>
    </location>
    <ligand>
        <name>ADP</name>
        <dbReference type="ChEBI" id="CHEBI:456216"/>
        <note>ligand shared with MCM5</note>
    </ligand>
</feature>
<feature type="binding site" evidence="1">
    <location>
        <position position="524"/>
    </location>
    <ligand>
        <name>ATP</name>
        <dbReference type="ChEBI" id="CHEBI:30616"/>
        <note>ligand shared with MCM7</note>
    </ligand>
</feature>
<feature type="binding site" evidence="1">
    <location>
        <position position="665"/>
    </location>
    <ligand>
        <name>ATP</name>
        <dbReference type="ChEBI" id="CHEBI:30616"/>
        <note>ligand shared with MCM7</note>
    </ligand>
</feature>
<name>MCM3_CHICK</name>
<sequence>MAAPAGGLGDAELREAQRDYLDFLDDEEDQGVYHGKVRDMISDNQYRLLVNINDLRRRNEKRANRLLSNAFEELIAFQRALKDFVASVDATYAKQYEDFYIGLEGSFGSKHVSPRTLTACFLSCIVCVEGIVTKCSLIRPKVVRSVHYCPATKKTIERRYTDLTSLDAFPSSTVYPTKDEENNPLETEYGLSVYKDHQTISIQEMPEKAPAGQLPRSVDVILDDDLVDKVKPGDRIQVVGTYRCLPGKKGGYTSGTFRTILIACHIKQMSKDARPLYSANDVAKIKRFSKSRSKDIFNQLARSLAPSIHGHEFIKKALLCMLLGGVEKVLENGSRIRGDINILLIGDPSVAKSQLLRYVLGTAPRAVGTTGRGSSGVGLTAAVTTDQETGERRLEAGAMVLADRGVVCIDEFDKMSDIDRTAIHEVMEQGRVTIAKAGIHARLNSRCSVLAAANPVYGRYDQYKTPMENIGLQDSLLSRFDLLFIMLDQMDSEQDREISDHVLRMHRYRNPNEQDGDAMPLGSAVEILATDDPDFAQEEEQELQVYEKHDDLLHGPNRRKEKIVSMEFMRKYIHVAKMIKPVLTQESADYIAEEYSSLRSQNQMNSDIARTSPVTARTLETLIRLSTAHAKARMSKTVDLQDAEAALELVQFAYFKKVLEKEKKRKKQVEDDSETEKEEEEEETQPEKEGRKQRRKKARTEGEEESYDPYDFSDAEQEMPEVQAHTPKTPESSATGEAKKPELADPRLKAFKAALLEVFKSSHAQSVGLKNVMESINRDNPEPFSLAGVKVALAHMQDDNQIMVSDDIIFLI</sequence>